<organism>
    <name type="scientific">Theileria parva</name>
    <name type="common">East coast fever infection agent</name>
    <dbReference type="NCBI Taxonomy" id="5875"/>
    <lineage>
        <taxon>Eukaryota</taxon>
        <taxon>Sar</taxon>
        <taxon>Alveolata</taxon>
        <taxon>Apicomplexa</taxon>
        <taxon>Aconoidasida</taxon>
        <taxon>Piroplasmida</taxon>
        <taxon>Theileriidae</taxon>
        <taxon>Theileria</taxon>
    </lineage>
</organism>
<protein>
    <recommendedName>
        <fullName evidence="2">Large ribosomal subunit protein eL18</fullName>
    </recommendedName>
    <alternativeName>
        <fullName>60S ribosomal protein L18</fullName>
    </alternativeName>
</protein>
<proteinExistence type="inferred from homology"/>
<name>RL18_THEPA</name>
<dbReference type="EMBL" id="AAGK01000002">
    <property type="protein sequence ID" value="EAN33085.1"/>
    <property type="molecule type" value="Genomic_DNA"/>
</dbReference>
<dbReference type="RefSeq" id="XP_765368.1">
    <property type="nucleotide sequence ID" value="XM_760275.1"/>
</dbReference>
<dbReference type="SMR" id="Q4N438"/>
<dbReference type="FunCoup" id="Q4N438">
    <property type="interactions" value="426"/>
</dbReference>
<dbReference type="STRING" id="5875.Q4N438"/>
<dbReference type="EnsemblProtists" id="EAN33085">
    <property type="protein sequence ID" value="EAN33085"/>
    <property type="gene ID" value="TP02_0801"/>
</dbReference>
<dbReference type="GeneID" id="3502270"/>
<dbReference type="KEGG" id="tpv:TP02_0801"/>
<dbReference type="VEuPathDB" id="PiroplasmaDB:TpMuguga_02g00801"/>
<dbReference type="eggNOG" id="KOG1714">
    <property type="taxonomic scope" value="Eukaryota"/>
</dbReference>
<dbReference type="InParanoid" id="Q4N438"/>
<dbReference type="OMA" id="IDICHKN"/>
<dbReference type="Proteomes" id="UP000001949">
    <property type="component" value="Unassembled WGS sequence"/>
</dbReference>
<dbReference type="GO" id="GO:0022625">
    <property type="term" value="C:cytosolic large ribosomal subunit"/>
    <property type="evidence" value="ECO:0007669"/>
    <property type="project" value="TreeGrafter"/>
</dbReference>
<dbReference type="GO" id="GO:0003723">
    <property type="term" value="F:RNA binding"/>
    <property type="evidence" value="ECO:0007669"/>
    <property type="project" value="TreeGrafter"/>
</dbReference>
<dbReference type="GO" id="GO:0003735">
    <property type="term" value="F:structural constituent of ribosome"/>
    <property type="evidence" value="ECO:0007669"/>
    <property type="project" value="InterPro"/>
</dbReference>
<dbReference type="GO" id="GO:0006412">
    <property type="term" value="P:translation"/>
    <property type="evidence" value="ECO:0007669"/>
    <property type="project" value="InterPro"/>
</dbReference>
<dbReference type="FunFam" id="3.100.10.10:FF:000001">
    <property type="entry name" value="60S ribosomal protein L18"/>
    <property type="match status" value="1"/>
</dbReference>
<dbReference type="Gene3D" id="3.100.10.10">
    <property type="match status" value="1"/>
</dbReference>
<dbReference type="InterPro" id="IPR000039">
    <property type="entry name" value="Ribosomal_eL18"/>
</dbReference>
<dbReference type="InterPro" id="IPR021131">
    <property type="entry name" value="Ribosomal_uL15/eL18"/>
</dbReference>
<dbReference type="InterPro" id="IPR036227">
    <property type="entry name" value="Ribosomal_uL15/eL18_sf"/>
</dbReference>
<dbReference type="PANTHER" id="PTHR10934">
    <property type="entry name" value="60S RIBOSOMAL PROTEIN L18"/>
    <property type="match status" value="1"/>
</dbReference>
<dbReference type="PANTHER" id="PTHR10934:SF2">
    <property type="entry name" value="LARGE RIBOSOMAL SUBUNIT PROTEIN EL18"/>
    <property type="match status" value="1"/>
</dbReference>
<dbReference type="Pfam" id="PF17135">
    <property type="entry name" value="Ribosomal_L18"/>
    <property type="match status" value="1"/>
</dbReference>
<dbReference type="SUPFAM" id="SSF52080">
    <property type="entry name" value="Ribosomal proteins L15p and L18e"/>
    <property type="match status" value="1"/>
</dbReference>
<comment type="subcellular location">
    <subcellularLocation>
        <location evidence="1">Cytoplasm</location>
    </subcellularLocation>
</comment>
<comment type="similarity">
    <text evidence="2">Belongs to the eukaryotic ribosomal protein eL18 family.</text>
</comment>
<keyword id="KW-0963">Cytoplasm</keyword>
<keyword id="KW-1185">Reference proteome</keyword>
<keyword id="KW-0687">Ribonucleoprotein</keyword>
<keyword id="KW-0689">Ribosomal protein</keyword>
<sequence>MGIDLVKAGRVKKPGRKALVSKNPYLRLLVKLYKFLSRRTDHSFNKVVLKRLLMPRRFKAPLSLSKLSKHMEKRPDNTAVVVGTVTNDERMDVVPKLSVCALRVTETARKRILASGGEVLTFDQLVARSPTGSRCTLLRGATKAREAVKHFRNEVKGNPKPYVRSKGRKFEKARGRRHSRAFKV</sequence>
<feature type="chain" id="PRO_0000291636" description="Large ribosomal subunit protein eL18">
    <location>
        <begin position="1"/>
        <end position="184"/>
    </location>
</feature>
<reference key="1">
    <citation type="journal article" date="2005" name="Science">
        <title>Genome sequence of Theileria parva, a bovine pathogen that transforms lymphocytes.</title>
        <authorList>
            <person name="Gardner M.J."/>
            <person name="Bishop R."/>
            <person name="Shah T."/>
            <person name="de Villiers E.P."/>
            <person name="Carlton J.M."/>
            <person name="Hall N."/>
            <person name="Ren Q."/>
            <person name="Paulsen I.T."/>
            <person name="Pain A."/>
            <person name="Berriman M."/>
            <person name="Wilson R.J.M."/>
            <person name="Sato S."/>
            <person name="Ralph S.A."/>
            <person name="Mann D.J."/>
            <person name="Xiong Z."/>
            <person name="Shallom S.J."/>
            <person name="Weidman J."/>
            <person name="Jiang L."/>
            <person name="Lynn J."/>
            <person name="Weaver B."/>
            <person name="Shoaibi A."/>
            <person name="Domingo A.R."/>
            <person name="Wasawo D."/>
            <person name="Crabtree J."/>
            <person name="Wortman J.R."/>
            <person name="Haas B."/>
            <person name="Angiuoli S.V."/>
            <person name="Creasy T.H."/>
            <person name="Lu C."/>
            <person name="Suh B."/>
            <person name="Silva J.C."/>
            <person name="Utterback T.R."/>
            <person name="Feldblyum T.V."/>
            <person name="Pertea M."/>
            <person name="Allen J."/>
            <person name="Nierman W.C."/>
            <person name="Taracha E.L.N."/>
            <person name="Salzberg S.L."/>
            <person name="White O.R."/>
            <person name="Fitzhugh H.A."/>
            <person name="Morzaria S."/>
            <person name="Venter J.C."/>
            <person name="Fraser C.M."/>
            <person name="Nene V."/>
        </authorList>
    </citation>
    <scope>NUCLEOTIDE SEQUENCE [LARGE SCALE GENOMIC DNA]</scope>
    <source>
        <strain>Muguga</strain>
    </source>
</reference>
<gene>
    <name type="primary">RPL18</name>
    <name type="ordered locus">TP02_0801</name>
</gene>
<accession>Q4N438</accession>
<evidence type="ECO:0000250" key="1"/>
<evidence type="ECO:0000305" key="2"/>